<feature type="chain" id="PRO_0000187436" description="Large ribosomal subunit protein bL34">
    <location>
        <begin position="1"/>
        <end position="44"/>
    </location>
</feature>
<feature type="region of interest" description="Disordered" evidence="2">
    <location>
        <begin position="1"/>
        <end position="44"/>
    </location>
</feature>
<feature type="compositionally biased region" description="Basic residues" evidence="2">
    <location>
        <begin position="1"/>
        <end position="19"/>
    </location>
</feature>
<feature type="compositionally biased region" description="Basic residues" evidence="2">
    <location>
        <begin position="33"/>
        <end position="44"/>
    </location>
</feature>
<feature type="helix" evidence="4">
    <location>
        <begin position="9"/>
        <end position="16"/>
    </location>
</feature>
<feature type="helix" evidence="4">
    <location>
        <begin position="18"/>
        <end position="23"/>
    </location>
</feature>
<feature type="helix" evidence="4">
    <location>
        <begin position="25"/>
        <end position="37"/>
    </location>
</feature>
<reference key="1">
    <citation type="journal article" date="2004" name="Science">
        <title>The complete genome sequence of Propionibacterium acnes, a commensal of human skin.</title>
        <authorList>
            <person name="Brueggemann H."/>
            <person name="Henne A."/>
            <person name="Hoster F."/>
            <person name="Liesegang H."/>
            <person name="Wiezer A."/>
            <person name="Strittmatter A."/>
            <person name="Hujer S."/>
            <person name="Duerre P."/>
            <person name="Gottschalk G."/>
        </authorList>
    </citation>
    <scope>NUCLEOTIDE SEQUENCE [LARGE SCALE GENOMIC DNA]</scope>
    <source>
        <strain>DSM 16379 / KPA171202</strain>
    </source>
</reference>
<name>RL34_CUTAK</name>
<proteinExistence type="evidence at protein level"/>
<dbReference type="EMBL" id="AE017283">
    <property type="protein sequence ID" value="AAT84062.1"/>
    <property type="molecule type" value="Genomic_DNA"/>
</dbReference>
<dbReference type="RefSeq" id="WP_002512704.1">
    <property type="nucleotide sequence ID" value="NZ_CP025935.1"/>
</dbReference>
<dbReference type="PDB" id="8CRX">
    <property type="method" value="EM"/>
    <property type="resolution" value="2.78 A"/>
    <property type="chains" value="1=1-44"/>
</dbReference>
<dbReference type="PDB" id="8CVM">
    <property type="method" value="EM"/>
    <property type="resolution" value="2.66 A"/>
    <property type="chains" value="1=1-44"/>
</dbReference>
<dbReference type="PDBsum" id="8CRX"/>
<dbReference type="PDBsum" id="8CVM"/>
<dbReference type="SMR" id="Q6A5A1"/>
<dbReference type="EnsemblBacteria" id="AAT84062">
    <property type="protein sequence ID" value="AAT84062"/>
    <property type="gene ID" value="PPA2353"/>
</dbReference>
<dbReference type="GeneID" id="92881893"/>
<dbReference type="KEGG" id="pac:PPA2353"/>
<dbReference type="eggNOG" id="COG0230">
    <property type="taxonomic scope" value="Bacteria"/>
</dbReference>
<dbReference type="HOGENOM" id="CLU_129938_2_1_11"/>
<dbReference type="Proteomes" id="UP000000603">
    <property type="component" value="Chromosome"/>
</dbReference>
<dbReference type="GO" id="GO:1990904">
    <property type="term" value="C:ribonucleoprotein complex"/>
    <property type="evidence" value="ECO:0007669"/>
    <property type="project" value="UniProtKB-KW"/>
</dbReference>
<dbReference type="GO" id="GO:0005840">
    <property type="term" value="C:ribosome"/>
    <property type="evidence" value="ECO:0007669"/>
    <property type="project" value="UniProtKB-KW"/>
</dbReference>
<dbReference type="GO" id="GO:0003735">
    <property type="term" value="F:structural constituent of ribosome"/>
    <property type="evidence" value="ECO:0007669"/>
    <property type="project" value="InterPro"/>
</dbReference>
<dbReference type="GO" id="GO:0006412">
    <property type="term" value="P:translation"/>
    <property type="evidence" value="ECO:0007669"/>
    <property type="project" value="UniProtKB-UniRule"/>
</dbReference>
<dbReference type="FunFam" id="1.10.287.3980:FF:000001">
    <property type="entry name" value="Mitochondrial ribosomal protein L34"/>
    <property type="match status" value="1"/>
</dbReference>
<dbReference type="Gene3D" id="1.10.287.3980">
    <property type="match status" value="1"/>
</dbReference>
<dbReference type="HAMAP" id="MF_00391">
    <property type="entry name" value="Ribosomal_bL34"/>
    <property type="match status" value="1"/>
</dbReference>
<dbReference type="InterPro" id="IPR000271">
    <property type="entry name" value="Ribosomal_bL34"/>
</dbReference>
<dbReference type="InterPro" id="IPR020939">
    <property type="entry name" value="Ribosomal_bL34_CS"/>
</dbReference>
<dbReference type="NCBIfam" id="TIGR01030">
    <property type="entry name" value="rpmH_bact"/>
    <property type="match status" value="1"/>
</dbReference>
<dbReference type="PANTHER" id="PTHR14503:SF4">
    <property type="entry name" value="LARGE RIBOSOMAL SUBUNIT PROTEIN BL34M"/>
    <property type="match status" value="1"/>
</dbReference>
<dbReference type="PANTHER" id="PTHR14503">
    <property type="entry name" value="MITOCHONDRIAL RIBOSOMAL PROTEIN 34 FAMILY MEMBER"/>
    <property type="match status" value="1"/>
</dbReference>
<dbReference type="Pfam" id="PF00468">
    <property type="entry name" value="Ribosomal_L34"/>
    <property type="match status" value="1"/>
</dbReference>
<dbReference type="PROSITE" id="PS00784">
    <property type="entry name" value="RIBOSOMAL_L34"/>
    <property type="match status" value="1"/>
</dbReference>
<protein>
    <recommendedName>
        <fullName evidence="1">Large ribosomal subunit protein bL34</fullName>
    </recommendedName>
    <alternativeName>
        <fullName evidence="3">50S ribosomal protein L34</fullName>
    </alternativeName>
</protein>
<evidence type="ECO:0000255" key="1">
    <source>
        <dbReference type="HAMAP-Rule" id="MF_00391"/>
    </source>
</evidence>
<evidence type="ECO:0000256" key="2">
    <source>
        <dbReference type="SAM" id="MobiDB-lite"/>
    </source>
</evidence>
<evidence type="ECO:0000305" key="3"/>
<evidence type="ECO:0007829" key="4">
    <source>
        <dbReference type="PDB" id="8CVM"/>
    </source>
</evidence>
<keyword id="KW-0002">3D-structure</keyword>
<keyword id="KW-0687">Ribonucleoprotein</keyword>
<keyword id="KW-0689">Ribosomal protein</keyword>
<accession>Q6A5A1</accession>
<sequence length="44" mass="5169">MKRTFQPSNRRRARNHGFRSRMSTRAGRSILAARRRKGRVNLSA</sequence>
<gene>
    <name evidence="1" type="primary">rpmH</name>
    <name type="ordered locus">PPA2353</name>
</gene>
<comment type="similarity">
    <text evidence="1">Belongs to the bacterial ribosomal protein bL34 family.</text>
</comment>
<organism>
    <name type="scientific">Cutibacterium acnes (strain DSM 16379 / KPA171202)</name>
    <name type="common">Propionibacterium acnes</name>
    <dbReference type="NCBI Taxonomy" id="267747"/>
    <lineage>
        <taxon>Bacteria</taxon>
        <taxon>Bacillati</taxon>
        <taxon>Actinomycetota</taxon>
        <taxon>Actinomycetes</taxon>
        <taxon>Propionibacteriales</taxon>
        <taxon>Propionibacteriaceae</taxon>
        <taxon>Cutibacterium</taxon>
    </lineage>
</organism>